<accession>A8GFL7</accession>
<dbReference type="EMBL" id="CP000826">
    <property type="protein sequence ID" value="ABV41907.1"/>
    <property type="molecule type" value="Genomic_DNA"/>
</dbReference>
<dbReference type="SMR" id="A8GFL7"/>
<dbReference type="STRING" id="399741.Spro_2806"/>
<dbReference type="KEGG" id="spe:Spro_2806"/>
<dbReference type="eggNOG" id="COG3140">
    <property type="taxonomic scope" value="Bacteria"/>
</dbReference>
<dbReference type="HOGENOM" id="CLU_185263_0_0_6"/>
<dbReference type="OrthoDB" id="6522084at2"/>
<dbReference type="HAMAP" id="MF_00507">
    <property type="entry name" value="UPF0181"/>
    <property type="match status" value="1"/>
</dbReference>
<dbReference type="InterPro" id="IPR005371">
    <property type="entry name" value="UPF0181"/>
</dbReference>
<dbReference type="NCBIfam" id="NF003476">
    <property type="entry name" value="PRK05114.1"/>
    <property type="match status" value="1"/>
</dbReference>
<dbReference type="Pfam" id="PF03701">
    <property type="entry name" value="UPF0181"/>
    <property type="match status" value="1"/>
</dbReference>
<evidence type="ECO:0000255" key="1">
    <source>
        <dbReference type="HAMAP-Rule" id="MF_00507"/>
    </source>
</evidence>
<evidence type="ECO:0000256" key="2">
    <source>
        <dbReference type="SAM" id="MobiDB-lite"/>
    </source>
</evidence>
<name>Y2806_SERP5</name>
<reference key="1">
    <citation type="submission" date="2007-09" db="EMBL/GenBank/DDBJ databases">
        <title>Complete sequence of chromosome of Serratia proteamaculans 568.</title>
        <authorList>
            <consortium name="US DOE Joint Genome Institute"/>
            <person name="Copeland A."/>
            <person name="Lucas S."/>
            <person name="Lapidus A."/>
            <person name="Barry K."/>
            <person name="Glavina del Rio T."/>
            <person name="Dalin E."/>
            <person name="Tice H."/>
            <person name="Pitluck S."/>
            <person name="Chain P."/>
            <person name="Malfatti S."/>
            <person name="Shin M."/>
            <person name="Vergez L."/>
            <person name="Schmutz J."/>
            <person name="Larimer F."/>
            <person name="Land M."/>
            <person name="Hauser L."/>
            <person name="Kyrpides N."/>
            <person name="Kim E."/>
            <person name="Taghavi S."/>
            <person name="Newman L."/>
            <person name="Vangronsveld J."/>
            <person name="van der Lelie D."/>
            <person name="Richardson P."/>
        </authorList>
    </citation>
    <scope>NUCLEOTIDE SEQUENCE [LARGE SCALE GENOMIC DNA]</scope>
    <source>
        <strain>568</strain>
    </source>
</reference>
<gene>
    <name type="ordered locus">Spro_2806</name>
</gene>
<protein>
    <recommendedName>
        <fullName evidence="1">UPF0181 protein Spro_2806</fullName>
    </recommendedName>
</protein>
<organism>
    <name type="scientific">Serratia proteamaculans (strain 568)</name>
    <dbReference type="NCBI Taxonomy" id="399741"/>
    <lineage>
        <taxon>Bacteria</taxon>
        <taxon>Pseudomonadati</taxon>
        <taxon>Pseudomonadota</taxon>
        <taxon>Gammaproteobacteria</taxon>
        <taxon>Enterobacterales</taxon>
        <taxon>Yersiniaceae</taxon>
        <taxon>Serratia</taxon>
    </lineage>
</organism>
<sequence>MLAGMPSLSHLEQQEAADRIHLLMEQGMSSGEAIARVAQEIREKHQGDQVSVMFDDEDDDEEYQERPDDQADDDSEEDENY</sequence>
<proteinExistence type="inferred from homology"/>
<comment type="similarity">
    <text evidence="1">Belongs to the UPF0181 family.</text>
</comment>
<feature type="chain" id="PRO_1000060850" description="UPF0181 protein Spro_2806">
    <location>
        <begin position="1"/>
        <end position="81"/>
    </location>
</feature>
<feature type="region of interest" description="Disordered" evidence="2">
    <location>
        <begin position="43"/>
        <end position="81"/>
    </location>
</feature>
<feature type="compositionally biased region" description="Acidic residues" evidence="2">
    <location>
        <begin position="54"/>
        <end position="63"/>
    </location>
</feature>
<feature type="compositionally biased region" description="Acidic residues" evidence="2">
    <location>
        <begin position="70"/>
        <end position="81"/>
    </location>
</feature>